<feature type="chain" id="PRO_0000201344" description="Inner membrane protein YpjD">
    <location>
        <begin position="1"/>
        <end position="263"/>
    </location>
</feature>
<feature type="topological domain" description="Periplasmic" evidence="2">
    <location>
        <begin position="1"/>
        <end position="3"/>
    </location>
</feature>
<feature type="transmembrane region" description="Helical" evidence="2">
    <location>
        <begin position="4"/>
        <end position="23"/>
    </location>
</feature>
<feature type="topological domain" description="Cytoplasmic" evidence="2">
    <location>
        <begin position="24"/>
        <end position="34"/>
    </location>
</feature>
<feature type="transmembrane region" description="Helical" evidence="2">
    <location>
        <begin position="35"/>
        <end position="54"/>
    </location>
</feature>
<feature type="topological domain" description="Periplasmic" evidence="2">
    <location>
        <begin position="55"/>
        <end position="63"/>
    </location>
</feature>
<feature type="transmembrane region" description="Helical" evidence="2">
    <location>
        <begin position="64"/>
        <end position="83"/>
    </location>
</feature>
<feature type="topological domain" description="Cytoplasmic" evidence="2">
    <location>
        <begin position="84"/>
        <end position="89"/>
    </location>
</feature>
<feature type="transmembrane region" description="Helical" evidence="2">
    <location>
        <begin position="90"/>
        <end position="109"/>
    </location>
</feature>
<feature type="topological domain" description="Periplasmic" evidence="2">
    <location>
        <begin position="110"/>
        <end position="123"/>
    </location>
</feature>
<feature type="transmembrane region" description="Helical" evidence="2">
    <location>
        <begin position="124"/>
        <end position="146"/>
    </location>
</feature>
<feature type="topological domain" description="Cytoplasmic" evidence="2">
    <location>
        <begin position="147"/>
        <end position="181"/>
    </location>
</feature>
<feature type="transmembrane region" description="Helical" evidence="2">
    <location>
        <begin position="182"/>
        <end position="201"/>
    </location>
</feature>
<feature type="topological domain" description="Periplasmic" evidence="2">
    <location>
        <begin position="202"/>
        <end position="210"/>
    </location>
</feature>
<feature type="transmembrane region" description="Helical" evidence="2">
    <location>
        <begin position="211"/>
        <end position="228"/>
    </location>
</feature>
<feature type="topological domain" description="Cytoplasmic" evidence="2">
    <location>
        <begin position="229"/>
        <end position="236"/>
    </location>
</feature>
<feature type="transmembrane region" description="Helical" evidence="2">
    <location>
        <begin position="237"/>
        <end position="259"/>
    </location>
</feature>
<feature type="topological domain" description="Periplasmic" evidence="2">
    <location>
        <begin position="260"/>
        <end position="263"/>
    </location>
</feature>
<gene>
    <name type="primary">ypjD</name>
    <name type="ordered locus">c3132</name>
</gene>
<reference key="1">
    <citation type="journal article" date="2002" name="Proc. Natl. Acad. Sci. U.S.A.">
        <title>Extensive mosaic structure revealed by the complete genome sequence of uropathogenic Escherichia coli.</title>
        <authorList>
            <person name="Welch R.A."/>
            <person name="Burland V."/>
            <person name="Plunkett G. III"/>
            <person name="Redford P."/>
            <person name="Roesch P."/>
            <person name="Rasko D."/>
            <person name="Buckles E.L."/>
            <person name="Liou S.-R."/>
            <person name="Boutin A."/>
            <person name="Hackett J."/>
            <person name="Stroud D."/>
            <person name="Mayhew G.F."/>
            <person name="Rose D.J."/>
            <person name="Zhou S."/>
            <person name="Schwartz D.C."/>
            <person name="Perna N.T."/>
            <person name="Mobley H.L.T."/>
            <person name="Donnenberg M.S."/>
            <person name="Blattner F.R."/>
        </authorList>
    </citation>
    <scope>NUCLEOTIDE SEQUENCE [LARGE SCALE GENOMIC DNA]</scope>
    <source>
        <strain>CFT073 / ATCC 700928 / UPEC</strain>
    </source>
</reference>
<dbReference type="EMBL" id="AE014075">
    <property type="protein sequence ID" value="AAN81582.1"/>
    <property type="status" value="ALT_INIT"/>
    <property type="molecule type" value="Genomic_DNA"/>
</dbReference>
<dbReference type="RefSeq" id="WP_001338897.1">
    <property type="nucleotide sequence ID" value="NZ_CP051263.1"/>
</dbReference>
<dbReference type="SMR" id="P64433"/>
<dbReference type="STRING" id="199310.c3132"/>
<dbReference type="KEGG" id="ecc:c3132"/>
<dbReference type="eggNOG" id="COG4137">
    <property type="taxonomic scope" value="Bacteria"/>
</dbReference>
<dbReference type="HOGENOM" id="CLU_049710_1_2_6"/>
<dbReference type="Proteomes" id="UP000001410">
    <property type="component" value="Chromosome"/>
</dbReference>
<dbReference type="GO" id="GO:0005886">
    <property type="term" value="C:plasma membrane"/>
    <property type="evidence" value="ECO:0007669"/>
    <property type="project" value="UniProtKB-SubCell"/>
</dbReference>
<dbReference type="GO" id="GO:0020037">
    <property type="term" value="F:heme binding"/>
    <property type="evidence" value="ECO:0007669"/>
    <property type="project" value="InterPro"/>
</dbReference>
<dbReference type="GO" id="GO:0017004">
    <property type="term" value="P:cytochrome complex assembly"/>
    <property type="evidence" value="ECO:0007669"/>
    <property type="project" value="InterPro"/>
</dbReference>
<dbReference type="InterPro" id="IPR002541">
    <property type="entry name" value="Cyt_c_assembly"/>
</dbReference>
<dbReference type="InterPro" id="IPR052372">
    <property type="entry name" value="YpjD/HemX"/>
</dbReference>
<dbReference type="PANTHER" id="PTHR38034">
    <property type="entry name" value="INNER MEMBRANE PROTEIN YPJD"/>
    <property type="match status" value="1"/>
</dbReference>
<dbReference type="PANTHER" id="PTHR38034:SF1">
    <property type="entry name" value="INNER MEMBRANE PROTEIN YPJD"/>
    <property type="match status" value="1"/>
</dbReference>
<dbReference type="Pfam" id="PF01578">
    <property type="entry name" value="Cytochrom_C_asm"/>
    <property type="match status" value="1"/>
</dbReference>
<protein>
    <recommendedName>
        <fullName>Inner membrane protein YpjD</fullName>
    </recommendedName>
</protein>
<organism>
    <name type="scientific">Escherichia coli O6:H1 (strain CFT073 / ATCC 700928 / UPEC)</name>
    <dbReference type="NCBI Taxonomy" id="199310"/>
    <lineage>
        <taxon>Bacteria</taxon>
        <taxon>Pseudomonadati</taxon>
        <taxon>Pseudomonadota</taxon>
        <taxon>Gammaproteobacteria</taxon>
        <taxon>Enterobacterales</taxon>
        <taxon>Enterobacteriaceae</taxon>
        <taxon>Escherichia</taxon>
    </lineage>
</organism>
<evidence type="ECO:0000250" key="1"/>
<evidence type="ECO:0000255" key="2"/>
<evidence type="ECO:0000305" key="3"/>
<sequence>MPVFALLALVAYSVSLALIVPGLLQKNGGWRRMAIISAVIALVCHAIALEARILPDGDSGQNLSLLNVGSLVSLMICTVMTIVASRNRGWLLLPIVYAFALINLALATFMPNEYITHLEATPGMLVHIGLSLFSYATLIIAALYALQLAWIDYQLKNKKLAFNQEMPPLMSIERKMFHITQIGVVLLTLTLCTGLFYMHNLFSMENIDKAVLSIVAWFVYIVLLWGHYHEGWRGRRVVWFNVAGAVILTLAYFGSRIVQQLIS</sequence>
<comment type="subcellular location">
    <subcellularLocation>
        <location evidence="1">Cell inner membrane</location>
        <topology evidence="1">Multi-pass membrane protein</topology>
    </subcellularLocation>
</comment>
<comment type="sequence caution" evidence="3">
    <conflict type="erroneous initiation">
        <sequence resource="EMBL-CDS" id="AAN81582"/>
    </conflict>
</comment>
<accession>P64433</accession>
<accession>P76599</accession>
<name>YPJD_ECOL6</name>
<keyword id="KW-0997">Cell inner membrane</keyword>
<keyword id="KW-1003">Cell membrane</keyword>
<keyword id="KW-0472">Membrane</keyword>
<keyword id="KW-1185">Reference proteome</keyword>
<keyword id="KW-0812">Transmembrane</keyword>
<keyword id="KW-1133">Transmembrane helix</keyword>
<proteinExistence type="inferred from homology"/>